<sequence>MSNISTDLQDVEKIIVLDYGSQYNQLISRRIREIGVFSELKSHKISAAEVREVNPVGIILSGGPNSVYEDGSFDIDPEIFELGIPILGICYGMQLLTHKLGGKVVPAGDAGNREYGQSTLTHTPSALFESTPDEQTVLMSHGDAVTEIPADFVRTGTSADCPYAAIENPDKHIYGIQFHPEVRHSVYGNDILRNFALNICKAKGDWSMDNFIDMQIKKIRKTVGDKRVLLGLSGGVDSSVVGVLLQKAIGDQLICIFVDHGLLRKGEADQVMDMLGGKFGLNIVKADAAKRFLDKLAGVSDPEQKRKIIGNEFVYVFDDEASKLKDVKFLAQGTLYTDVIESGTDTAQTIKSHHNVGGLPEDMQFELIEPLNTLYKDEVRALGTELGMPDHIVWRQPFPGPGLAIRVMGEITEEKLETVRESDAILREEIAKAGLDRDIWQYFTVNTGVRSVGVMGDGRTYDYTIAIRAITSIDGMTADFAKIPWEVLQKISVRIVNEVDHVNRIVYDITSKPPATVEWE</sequence>
<keyword id="KW-0067">ATP-binding</keyword>
<keyword id="KW-0315">Glutamine amidotransferase</keyword>
<keyword id="KW-0332">GMP biosynthesis</keyword>
<keyword id="KW-0436">Ligase</keyword>
<keyword id="KW-0547">Nucleotide-binding</keyword>
<keyword id="KW-0658">Purine biosynthesis</keyword>
<evidence type="ECO:0000255" key="1">
    <source>
        <dbReference type="HAMAP-Rule" id="MF_00344"/>
    </source>
</evidence>
<proteinExistence type="inferred from homology"/>
<feature type="chain" id="PRO_1000120436" description="GMP synthase [glutamine-hydrolyzing]">
    <location>
        <begin position="1"/>
        <end position="520"/>
    </location>
</feature>
<feature type="domain" description="Glutamine amidotransferase type-1" evidence="1">
    <location>
        <begin position="13"/>
        <end position="205"/>
    </location>
</feature>
<feature type="domain" description="GMPS ATP-PPase" evidence="1">
    <location>
        <begin position="206"/>
        <end position="395"/>
    </location>
</feature>
<feature type="active site" description="Nucleophile" evidence="1">
    <location>
        <position position="90"/>
    </location>
</feature>
<feature type="active site" evidence="1">
    <location>
        <position position="179"/>
    </location>
</feature>
<feature type="active site" evidence="1">
    <location>
        <position position="181"/>
    </location>
</feature>
<feature type="binding site" evidence="1">
    <location>
        <begin position="233"/>
        <end position="239"/>
    </location>
    <ligand>
        <name>ATP</name>
        <dbReference type="ChEBI" id="CHEBI:30616"/>
    </ligand>
</feature>
<reference key="1">
    <citation type="journal article" date="2009" name="BMC Genomics">
        <title>Genome evolution driven by host adaptations results in a more virulent and antimicrobial-resistant Streptococcus pneumoniae serotype 14.</title>
        <authorList>
            <person name="Ding F."/>
            <person name="Tang P."/>
            <person name="Hsu M.-H."/>
            <person name="Cui P."/>
            <person name="Hu S."/>
            <person name="Yu J."/>
            <person name="Chiu C.-H."/>
        </authorList>
    </citation>
    <scope>NUCLEOTIDE SEQUENCE [LARGE SCALE GENOMIC DNA]</scope>
    <source>
        <strain>CGSP14</strain>
    </source>
</reference>
<dbReference type="EC" id="6.3.5.2" evidence="1"/>
<dbReference type="EMBL" id="CP001033">
    <property type="protein sequence ID" value="ACB90685.1"/>
    <property type="molecule type" value="Genomic_DNA"/>
</dbReference>
<dbReference type="RefSeq" id="WP_000065728.1">
    <property type="nucleotide sequence ID" value="NC_010582.1"/>
</dbReference>
<dbReference type="SMR" id="B2IQR1"/>
<dbReference type="MEROPS" id="C26.957"/>
<dbReference type="KEGG" id="spw:SPCG_1433"/>
<dbReference type="HOGENOM" id="CLU_014340_0_5_9"/>
<dbReference type="UniPathway" id="UPA00189">
    <property type="reaction ID" value="UER00296"/>
</dbReference>
<dbReference type="GO" id="GO:0005829">
    <property type="term" value="C:cytosol"/>
    <property type="evidence" value="ECO:0007669"/>
    <property type="project" value="TreeGrafter"/>
</dbReference>
<dbReference type="GO" id="GO:0005524">
    <property type="term" value="F:ATP binding"/>
    <property type="evidence" value="ECO:0007669"/>
    <property type="project" value="UniProtKB-UniRule"/>
</dbReference>
<dbReference type="GO" id="GO:0003921">
    <property type="term" value="F:GMP synthase activity"/>
    <property type="evidence" value="ECO:0007669"/>
    <property type="project" value="InterPro"/>
</dbReference>
<dbReference type="CDD" id="cd01742">
    <property type="entry name" value="GATase1_GMP_Synthase"/>
    <property type="match status" value="1"/>
</dbReference>
<dbReference type="CDD" id="cd01997">
    <property type="entry name" value="GMP_synthase_C"/>
    <property type="match status" value="1"/>
</dbReference>
<dbReference type="FunFam" id="3.30.300.10:FF:000002">
    <property type="entry name" value="GMP synthase [glutamine-hydrolyzing]"/>
    <property type="match status" value="1"/>
</dbReference>
<dbReference type="FunFam" id="3.40.50.620:FF:000001">
    <property type="entry name" value="GMP synthase [glutamine-hydrolyzing]"/>
    <property type="match status" value="1"/>
</dbReference>
<dbReference type="FunFam" id="3.40.50.880:FF:000001">
    <property type="entry name" value="GMP synthase [glutamine-hydrolyzing]"/>
    <property type="match status" value="1"/>
</dbReference>
<dbReference type="Gene3D" id="3.30.300.10">
    <property type="match status" value="1"/>
</dbReference>
<dbReference type="Gene3D" id="3.40.50.880">
    <property type="match status" value="1"/>
</dbReference>
<dbReference type="Gene3D" id="3.40.50.620">
    <property type="entry name" value="HUPs"/>
    <property type="match status" value="1"/>
</dbReference>
<dbReference type="HAMAP" id="MF_00344">
    <property type="entry name" value="GMP_synthase"/>
    <property type="match status" value="1"/>
</dbReference>
<dbReference type="InterPro" id="IPR029062">
    <property type="entry name" value="Class_I_gatase-like"/>
</dbReference>
<dbReference type="InterPro" id="IPR017926">
    <property type="entry name" value="GATASE"/>
</dbReference>
<dbReference type="InterPro" id="IPR001674">
    <property type="entry name" value="GMP_synth_C"/>
</dbReference>
<dbReference type="InterPro" id="IPR004739">
    <property type="entry name" value="GMP_synth_GATase"/>
</dbReference>
<dbReference type="InterPro" id="IPR022955">
    <property type="entry name" value="GMP_synthase"/>
</dbReference>
<dbReference type="InterPro" id="IPR025777">
    <property type="entry name" value="GMPS_ATP_PPase_dom"/>
</dbReference>
<dbReference type="InterPro" id="IPR022310">
    <property type="entry name" value="NAD/GMP_synthase"/>
</dbReference>
<dbReference type="InterPro" id="IPR014729">
    <property type="entry name" value="Rossmann-like_a/b/a_fold"/>
</dbReference>
<dbReference type="NCBIfam" id="TIGR00884">
    <property type="entry name" value="guaA_Cterm"/>
    <property type="match status" value="1"/>
</dbReference>
<dbReference type="NCBIfam" id="TIGR00888">
    <property type="entry name" value="guaA_Nterm"/>
    <property type="match status" value="1"/>
</dbReference>
<dbReference type="NCBIfam" id="NF000848">
    <property type="entry name" value="PRK00074.1"/>
    <property type="match status" value="1"/>
</dbReference>
<dbReference type="PANTHER" id="PTHR11922:SF2">
    <property type="entry name" value="GMP SYNTHASE [GLUTAMINE-HYDROLYZING]"/>
    <property type="match status" value="1"/>
</dbReference>
<dbReference type="PANTHER" id="PTHR11922">
    <property type="entry name" value="GMP SYNTHASE-RELATED"/>
    <property type="match status" value="1"/>
</dbReference>
<dbReference type="Pfam" id="PF00117">
    <property type="entry name" value="GATase"/>
    <property type="match status" value="1"/>
</dbReference>
<dbReference type="Pfam" id="PF00958">
    <property type="entry name" value="GMP_synt_C"/>
    <property type="match status" value="1"/>
</dbReference>
<dbReference type="Pfam" id="PF02540">
    <property type="entry name" value="NAD_synthase"/>
    <property type="match status" value="1"/>
</dbReference>
<dbReference type="PRINTS" id="PR00097">
    <property type="entry name" value="ANTSNTHASEII"/>
</dbReference>
<dbReference type="PRINTS" id="PR00099">
    <property type="entry name" value="CPSGATASE"/>
</dbReference>
<dbReference type="PRINTS" id="PR00096">
    <property type="entry name" value="GATASE"/>
</dbReference>
<dbReference type="SUPFAM" id="SSF52402">
    <property type="entry name" value="Adenine nucleotide alpha hydrolases-like"/>
    <property type="match status" value="1"/>
</dbReference>
<dbReference type="SUPFAM" id="SSF52317">
    <property type="entry name" value="Class I glutamine amidotransferase-like"/>
    <property type="match status" value="1"/>
</dbReference>
<dbReference type="PROSITE" id="PS51273">
    <property type="entry name" value="GATASE_TYPE_1"/>
    <property type="match status" value="1"/>
</dbReference>
<dbReference type="PROSITE" id="PS51553">
    <property type="entry name" value="GMPS_ATP_PPASE"/>
    <property type="match status" value="1"/>
</dbReference>
<organism>
    <name type="scientific">Streptococcus pneumoniae (strain CGSP14)</name>
    <dbReference type="NCBI Taxonomy" id="516950"/>
    <lineage>
        <taxon>Bacteria</taxon>
        <taxon>Bacillati</taxon>
        <taxon>Bacillota</taxon>
        <taxon>Bacilli</taxon>
        <taxon>Lactobacillales</taxon>
        <taxon>Streptococcaceae</taxon>
        <taxon>Streptococcus</taxon>
    </lineage>
</organism>
<accession>B2IQR1</accession>
<name>GUAA_STRPS</name>
<gene>
    <name evidence="1" type="primary">guaA</name>
    <name type="ordered locus">SPCG_1433</name>
</gene>
<comment type="function">
    <text evidence="1">Catalyzes the synthesis of GMP from XMP.</text>
</comment>
<comment type="catalytic activity">
    <reaction evidence="1">
        <text>XMP + L-glutamine + ATP + H2O = GMP + L-glutamate + AMP + diphosphate + 2 H(+)</text>
        <dbReference type="Rhea" id="RHEA:11680"/>
        <dbReference type="ChEBI" id="CHEBI:15377"/>
        <dbReference type="ChEBI" id="CHEBI:15378"/>
        <dbReference type="ChEBI" id="CHEBI:29985"/>
        <dbReference type="ChEBI" id="CHEBI:30616"/>
        <dbReference type="ChEBI" id="CHEBI:33019"/>
        <dbReference type="ChEBI" id="CHEBI:57464"/>
        <dbReference type="ChEBI" id="CHEBI:58115"/>
        <dbReference type="ChEBI" id="CHEBI:58359"/>
        <dbReference type="ChEBI" id="CHEBI:456215"/>
        <dbReference type="EC" id="6.3.5.2"/>
    </reaction>
</comment>
<comment type="pathway">
    <text evidence="1">Purine metabolism; GMP biosynthesis; GMP from XMP (L-Gln route): step 1/1.</text>
</comment>
<comment type="subunit">
    <text evidence="1">Homodimer.</text>
</comment>
<protein>
    <recommendedName>
        <fullName evidence="1">GMP synthase [glutamine-hydrolyzing]</fullName>
        <ecNumber evidence="1">6.3.5.2</ecNumber>
    </recommendedName>
    <alternativeName>
        <fullName evidence="1">GMP synthetase</fullName>
    </alternativeName>
    <alternativeName>
        <fullName evidence="1">Glutamine amidotransferase</fullName>
    </alternativeName>
</protein>